<organism>
    <name type="scientific">Persephonella marina (strain DSM 14350 / EX-H1)</name>
    <dbReference type="NCBI Taxonomy" id="123214"/>
    <lineage>
        <taxon>Bacteria</taxon>
        <taxon>Pseudomonadati</taxon>
        <taxon>Aquificota</taxon>
        <taxon>Aquificia</taxon>
        <taxon>Aquificales</taxon>
        <taxon>Hydrogenothermaceae</taxon>
        <taxon>Persephonella</taxon>
    </lineage>
</organism>
<accession>C0QRW6</accession>
<protein>
    <recommendedName>
        <fullName evidence="1">1-(5-phosphoribosyl)-5-[(5-phosphoribosylamino)methylideneamino] imidazole-4-carboxamide isomerase</fullName>
        <ecNumber evidence="1">5.3.1.16</ecNumber>
    </recommendedName>
    <alternativeName>
        <fullName evidence="1">Phosphoribosylformimino-5-aminoimidazole carboxamide ribotide isomerase</fullName>
    </alternativeName>
</protein>
<dbReference type="EC" id="5.3.1.16" evidence="1"/>
<dbReference type="EMBL" id="CP001230">
    <property type="protein sequence ID" value="ACO04337.1"/>
    <property type="molecule type" value="Genomic_DNA"/>
</dbReference>
<dbReference type="RefSeq" id="WP_012676575.1">
    <property type="nucleotide sequence ID" value="NC_012440.1"/>
</dbReference>
<dbReference type="SMR" id="C0QRW6"/>
<dbReference type="STRING" id="123214.PERMA_1646"/>
<dbReference type="PaxDb" id="123214-PERMA_1646"/>
<dbReference type="KEGG" id="pmx:PERMA_1646"/>
<dbReference type="eggNOG" id="COG0106">
    <property type="taxonomic scope" value="Bacteria"/>
</dbReference>
<dbReference type="HOGENOM" id="CLU_048577_1_1_0"/>
<dbReference type="OrthoDB" id="9781903at2"/>
<dbReference type="UniPathway" id="UPA00031">
    <property type="reaction ID" value="UER00009"/>
</dbReference>
<dbReference type="Proteomes" id="UP000001366">
    <property type="component" value="Chromosome"/>
</dbReference>
<dbReference type="GO" id="GO:0005737">
    <property type="term" value="C:cytoplasm"/>
    <property type="evidence" value="ECO:0007669"/>
    <property type="project" value="UniProtKB-SubCell"/>
</dbReference>
<dbReference type="GO" id="GO:0003949">
    <property type="term" value="F:1-(5-phosphoribosyl)-5-[(5-phosphoribosylamino)methylideneamino]imidazole-4-carboxamide isomerase activity"/>
    <property type="evidence" value="ECO:0007669"/>
    <property type="project" value="UniProtKB-UniRule"/>
</dbReference>
<dbReference type="GO" id="GO:0000105">
    <property type="term" value="P:L-histidine biosynthetic process"/>
    <property type="evidence" value="ECO:0007669"/>
    <property type="project" value="UniProtKB-UniRule"/>
</dbReference>
<dbReference type="GO" id="GO:0000162">
    <property type="term" value="P:L-tryptophan biosynthetic process"/>
    <property type="evidence" value="ECO:0007669"/>
    <property type="project" value="TreeGrafter"/>
</dbReference>
<dbReference type="CDD" id="cd04732">
    <property type="entry name" value="HisA"/>
    <property type="match status" value="1"/>
</dbReference>
<dbReference type="FunFam" id="3.20.20.70:FF:000009">
    <property type="entry name" value="1-(5-phosphoribosyl)-5-[(5-phosphoribosylamino)methylideneamino] imidazole-4-carboxamide isomerase"/>
    <property type="match status" value="1"/>
</dbReference>
<dbReference type="Gene3D" id="3.20.20.70">
    <property type="entry name" value="Aldolase class I"/>
    <property type="match status" value="1"/>
</dbReference>
<dbReference type="HAMAP" id="MF_01014">
    <property type="entry name" value="HisA"/>
    <property type="match status" value="1"/>
</dbReference>
<dbReference type="InterPro" id="IPR013785">
    <property type="entry name" value="Aldolase_TIM"/>
</dbReference>
<dbReference type="InterPro" id="IPR006062">
    <property type="entry name" value="His_biosynth"/>
</dbReference>
<dbReference type="InterPro" id="IPR006063">
    <property type="entry name" value="HisA_bact_arch"/>
</dbReference>
<dbReference type="InterPro" id="IPR044524">
    <property type="entry name" value="Isoase_HisA-like"/>
</dbReference>
<dbReference type="InterPro" id="IPR023016">
    <property type="entry name" value="Isoase_HisA-like_bact"/>
</dbReference>
<dbReference type="InterPro" id="IPR011060">
    <property type="entry name" value="RibuloseP-bd_barrel"/>
</dbReference>
<dbReference type="NCBIfam" id="TIGR00007">
    <property type="entry name" value="1-(5-phosphoribosyl)-5-[(5-phosphoribosylamino)methylideneamino]imidazole-4-carboxamide isomerase"/>
    <property type="match status" value="1"/>
</dbReference>
<dbReference type="NCBIfam" id="NF010112">
    <property type="entry name" value="PRK13585.1"/>
    <property type="match status" value="1"/>
</dbReference>
<dbReference type="PANTHER" id="PTHR43090">
    <property type="entry name" value="1-(5-PHOSPHORIBOSYL)-5-[(5-PHOSPHORIBOSYLAMINO)METHYLIDENEAMINO] IMIDAZOLE-4-CARBOXAMIDE ISOMERASE"/>
    <property type="match status" value="1"/>
</dbReference>
<dbReference type="PANTHER" id="PTHR43090:SF2">
    <property type="entry name" value="1-(5-PHOSPHORIBOSYL)-5-[(5-PHOSPHORIBOSYLAMINO)METHYLIDENEAMINO] IMIDAZOLE-4-CARBOXAMIDE ISOMERASE"/>
    <property type="match status" value="1"/>
</dbReference>
<dbReference type="Pfam" id="PF00977">
    <property type="entry name" value="His_biosynth"/>
    <property type="match status" value="1"/>
</dbReference>
<dbReference type="SUPFAM" id="SSF51366">
    <property type="entry name" value="Ribulose-phoshate binding barrel"/>
    <property type="match status" value="1"/>
</dbReference>
<evidence type="ECO:0000255" key="1">
    <source>
        <dbReference type="HAMAP-Rule" id="MF_01014"/>
    </source>
</evidence>
<feature type="chain" id="PRO_1000148982" description="1-(5-phosphoribosyl)-5-[(5-phosphoribosylamino)methylideneamino] imidazole-4-carboxamide isomerase">
    <location>
        <begin position="1"/>
        <end position="241"/>
    </location>
</feature>
<feature type="active site" description="Proton acceptor" evidence="1">
    <location>
        <position position="12"/>
    </location>
</feature>
<feature type="active site" description="Proton donor" evidence="1">
    <location>
        <position position="133"/>
    </location>
</feature>
<reference key="1">
    <citation type="journal article" date="2009" name="J. Bacteriol.">
        <title>Complete and draft genome sequences of six members of the Aquificales.</title>
        <authorList>
            <person name="Reysenbach A.-L."/>
            <person name="Hamamura N."/>
            <person name="Podar M."/>
            <person name="Griffiths E."/>
            <person name="Ferreira S."/>
            <person name="Hochstein R."/>
            <person name="Heidelberg J."/>
            <person name="Johnson J."/>
            <person name="Mead D."/>
            <person name="Pohorille A."/>
            <person name="Sarmiento M."/>
            <person name="Schweighofer K."/>
            <person name="Seshadri R."/>
            <person name="Voytek M.A."/>
        </authorList>
    </citation>
    <scope>NUCLEOTIDE SEQUENCE [LARGE SCALE GENOMIC DNA]</scope>
    <source>
        <strain>DSM 14350 / EX-H1</strain>
    </source>
</reference>
<name>HIS4_PERMH</name>
<proteinExistence type="inferred from homology"/>
<sequence length="241" mass="26493">MGLRSFVIPAVDIKDGKAVRLYKGDPEAVTVYGDDPVSVAKQWEEKGAKHLHIVDLDGAFEGKPKNIDIVKDIVKTVSIPVEFGGGLRSFEAVKSIVETGVERVVIGSLAYQNRQEFERIVSAYPGKVIVGIDAKDGKVAIKGWLEKTEYTPLDFARMFDDLDIWGFLYTDVNRDGAMVGPNIEGTKYLAQNLKHPVIASGGVGSVEDLKKLYDLKKYGVYGVVVGKALYEGKIKLEQLED</sequence>
<comment type="catalytic activity">
    <reaction evidence="1">
        <text>1-(5-phospho-beta-D-ribosyl)-5-[(5-phospho-beta-D-ribosylamino)methylideneamino]imidazole-4-carboxamide = 5-[(5-phospho-1-deoxy-D-ribulos-1-ylimino)methylamino]-1-(5-phospho-beta-D-ribosyl)imidazole-4-carboxamide</text>
        <dbReference type="Rhea" id="RHEA:15469"/>
        <dbReference type="ChEBI" id="CHEBI:58435"/>
        <dbReference type="ChEBI" id="CHEBI:58525"/>
        <dbReference type="EC" id="5.3.1.16"/>
    </reaction>
</comment>
<comment type="pathway">
    <text evidence="1">Amino-acid biosynthesis; L-histidine biosynthesis; L-histidine from 5-phospho-alpha-D-ribose 1-diphosphate: step 4/9.</text>
</comment>
<comment type="subcellular location">
    <subcellularLocation>
        <location evidence="1">Cytoplasm</location>
    </subcellularLocation>
</comment>
<comment type="similarity">
    <text evidence="1">Belongs to the HisA/HisF family.</text>
</comment>
<keyword id="KW-0028">Amino-acid biosynthesis</keyword>
<keyword id="KW-0963">Cytoplasm</keyword>
<keyword id="KW-0368">Histidine biosynthesis</keyword>
<keyword id="KW-0413">Isomerase</keyword>
<keyword id="KW-1185">Reference proteome</keyword>
<gene>
    <name evidence="1" type="primary">hisA</name>
    <name type="ordered locus">PERMA_1646</name>
</gene>